<keyword id="KW-0375">Hydrogen ion transport</keyword>
<keyword id="KW-0406">Ion transport</keyword>
<keyword id="KW-0813">Transport</keyword>
<feature type="chain" id="PRO_0000144640" description="V-type proton ATPase subunit B">
    <location>
        <begin position="1"/>
        <end position="500"/>
    </location>
</feature>
<protein>
    <recommendedName>
        <fullName>V-type proton ATPase subunit B</fullName>
        <shortName>V-ATPase subunit B</shortName>
    </recommendedName>
    <alternativeName>
        <fullName>Vacuolar proton pump subunit B</fullName>
    </alternativeName>
</protein>
<accession>P48413</accession>
<name>VATB_CYACA</name>
<evidence type="ECO:0000305" key="1"/>
<organism>
    <name type="scientific">Cyanidium caldarium</name>
    <name type="common">Red alga</name>
    <dbReference type="NCBI Taxonomy" id="2771"/>
    <lineage>
        <taxon>Eukaryota</taxon>
        <taxon>Rhodophyta</taxon>
        <taxon>Bangiophyceae</taxon>
        <taxon>Cyanidiales</taxon>
        <taxon>Cyanidiaceae</taxon>
        <taxon>Cyanidium</taxon>
    </lineage>
</organism>
<dbReference type="EMBL" id="U17101">
    <property type="protein sequence ID" value="AAA85821.1"/>
    <property type="molecule type" value="Genomic_DNA"/>
</dbReference>
<dbReference type="PIR" id="T14363">
    <property type="entry name" value="T14363"/>
</dbReference>
<dbReference type="SMR" id="P48413"/>
<dbReference type="GO" id="GO:0033180">
    <property type="term" value="C:proton-transporting V-type ATPase, V1 domain"/>
    <property type="evidence" value="ECO:0007669"/>
    <property type="project" value="InterPro"/>
</dbReference>
<dbReference type="GO" id="GO:0005524">
    <property type="term" value="F:ATP binding"/>
    <property type="evidence" value="ECO:0007669"/>
    <property type="project" value="InterPro"/>
</dbReference>
<dbReference type="GO" id="GO:0046961">
    <property type="term" value="F:proton-transporting ATPase activity, rotational mechanism"/>
    <property type="evidence" value="ECO:0007669"/>
    <property type="project" value="InterPro"/>
</dbReference>
<dbReference type="GO" id="GO:0046034">
    <property type="term" value="P:ATP metabolic process"/>
    <property type="evidence" value="ECO:0007669"/>
    <property type="project" value="InterPro"/>
</dbReference>
<dbReference type="GO" id="GO:0007035">
    <property type="term" value="P:vacuolar acidification"/>
    <property type="evidence" value="ECO:0007669"/>
    <property type="project" value="TreeGrafter"/>
</dbReference>
<dbReference type="CDD" id="cd18112">
    <property type="entry name" value="ATP-synt_V_A-type_beta_C"/>
    <property type="match status" value="1"/>
</dbReference>
<dbReference type="CDD" id="cd18118">
    <property type="entry name" value="ATP-synt_V_A-type_beta_N"/>
    <property type="match status" value="1"/>
</dbReference>
<dbReference type="CDD" id="cd01135">
    <property type="entry name" value="V_A-ATPase_B"/>
    <property type="match status" value="1"/>
</dbReference>
<dbReference type="FunFam" id="3.40.50.12240:FF:000001">
    <property type="entry name" value="V-type proton ATPase subunit B, brain"/>
    <property type="match status" value="1"/>
</dbReference>
<dbReference type="Gene3D" id="3.40.50.12240">
    <property type="match status" value="1"/>
</dbReference>
<dbReference type="HAMAP" id="MF_00310">
    <property type="entry name" value="ATP_synth_B_arch"/>
    <property type="match status" value="1"/>
</dbReference>
<dbReference type="InterPro" id="IPR055190">
    <property type="entry name" value="ATP-synt_VA_C"/>
</dbReference>
<dbReference type="InterPro" id="IPR020003">
    <property type="entry name" value="ATPase_a/bsu_AS"/>
</dbReference>
<dbReference type="InterPro" id="IPR004100">
    <property type="entry name" value="ATPase_F1/V1/A1_a/bsu_N"/>
</dbReference>
<dbReference type="InterPro" id="IPR000194">
    <property type="entry name" value="ATPase_F1/V1/A1_a/bsu_nucl-bd"/>
</dbReference>
<dbReference type="InterPro" id="IPR005723">
    <property type="entry name" value="ATPase_V1-cplx_bsu"/>
</dbReference>
<dbReference type="InterPro" id="IPR027417">
    <property type="entry name" value="P-loop_NTPase"/>
</dbReference>
<dbReference type="InterPro" id="IPR022879">
    <property type="entry name" value="V-ATPase_su_B/beta"/>
</dbReference>
<dbReference type="NCBIfam" id="NF003235">
    <property type="entry name" value="PRK04196.1"/>
    <property type="match status" value="1"/>
</dbReference>
<dbReference type="NCBIfam" id="TIGR01040">
    <property type="entry name" value="V-ATPase_V1_B"/>
    <property type="match status" value="1"/>
</dbReference>
<dbReference type="PANTHER" id="PTHR43389">
    <property type="entry name" value="V-TYPE PROTON ATPASE SUBUNIT B"/>
    <property type="match status" value="1"/>
</dbReference>
<dbReference type="PANTHER" id="PTHR43389:SF4">
    <property type="entry name" value="V-TYPE PROTON ATPASE SUBUNIT B"/>
    <property type="match status" value="1"/>
</dbReference>
<dbReference type="Pfam" id="PF00006">
    <property type="entry name" value="ATP-synt_ab"/>
    <property type="match status" value="1"/>
</dbReference>
<dbReference type="Pfam" id="PF02874">
    <property type="entry name" value="ATP-synt_ab_N"/>
    <property type="match status" value="1"/>
</dbReference>
<dbReference type="Pfam" id="PF22919">
    <property type="entry name" value="ATP-synt_VA_C"/>
    <property type="match status" value="1"/>
</dbReference>
<dbReference type="PIRSF" id="PIRSF039114">
    <property type="entry name" value="V-ATPsynth_beta/V-ATPase_B"/>
    <property type="match status" value="1"/>
</dbReference>
<dbReference type="SUPFAM" id="SSF52540">
    <property type="entry name" value="P-loop containing nucleoside triphosphate hydrolases"/>
    <property type="match status" value="1"/>
</dbReference>
<dbReference type="PROSITE" id="PS00152">
    <property type="entry name" value="ATPASE_ALPHA_BETA"/>
    <property type="match status" value="1"/>
</dbReference>
<sequence>MEAFNLHKKAVSRDYIVKPRLEYRTVSAVNGPLIILQNVKSPRFAEIVNVTLGDGSVRRGQVLEINQDKAVVQIFEGTTGIDNKKTVCQFTGEILKTPVSLDMLGRVFNGSGKPIDGGPPILPEAYLDIQGQPINPQSRTYPEEMFETGISSIDVMNSIARGQKIPLFSGAGLPHNEVAAQICRQVCLVSTCTLVKRSGKDEEDFAIVFAAMGVNMETARFFRQDFEENGAMERVTLFLNLANDPTIERIITPRLALTFAEYLAYEKGKHVLVILTDMSAYADALREVSAAREEVPGRRGYPGYMYTDLATIYERAGRVEGRPGSITQLPILTMPNDDITHPIPDLTGYITEEQIYLDRQLHNRQIYPPINVLPSLSRLMKSAIGEGMTRKDHSDVSNQLYAAYAMGKDALAMRAVVGVEALSQEDLLYLEFHDKFERRFVNQGAYERRDIYTSLDMAWDLLRIFPVQMLRRIPEKILQEYYHRTSNYEHKENKPHSSRS</sequence>
<reference key="1">
    <citation type="journal article" date="1995" name="Biochim. Biophys. Acta">
        <title>Cyanidium caldarium genes encoding subunits A and B of V-ATPase.</title>
        <authorList>
            <person name="Ziegler K."/>
            <person name="Hauska G."/>
            <person name="Nelson N."/>
        </authorList>
    </citation>
    <scope>NUCLEOTIDE SEQUENCE [GENOMIC DNA]</scope>
</reference>
<comment type="function">
    <text>Non-catalytic subunit of the peripheral V1 complex of vacuolar ATPase. V-ATPase is responsible for acidifying a variety of intracellular compartments in eukaryotic cells.</text>
</comment>
<comment type="subunit">
    <text>V-ATPase is a heteromultimeric enzyme composed of a peripheral catalytic V1 complex (main components: subunits A, B, C, D, E, and F) attached to an integral membrane V0 proton pore complex (main component: the proteolipid protein).</text>
</comment>
<comment type="similarity">
    <text evidence="1">Belongs to the ATPase alpha/beta chains family.</text>
</comment>
<proteinExistence type="inferred from homology"/>